<reference key="1">
    <citation type="journal article" date="2006" name="Genome Biol.">
        <title>The genome of Rhizobium leguminosarum has recognizable core and accessory components.</title>
        <authorList>
            <person name="Young J.P.W."/>
            <person name="Crossman L.C."/>
            <person name="Johnston A.W.B."/>
            <person name="Thomson N.R."/>
            <person name="Ghazoui Z.F."/>
            <person name="Hull K.H."/>
            <person name="Wexler M."/>
            <person name="Curson A.R.J."/>
            <person name="Todd J.D."/>
            <person name="Poole P.S."/>
            <person name="Mauchline T.H."/>
            <person name="East A.K."/>
            <person name="Quail M.A."/>
            <person name="Churcher C."/>
            <person name="Arrowsmith C."/>
            <person name="Cherevach I."/>
            <person name="Chillingworth T."/>
            <person name="Clarke K."/>
            <person name="Cronin A."/>
            <person name="Davis P."/>
            <person name="Fraser A."/>
            <person name="Hance Z."/>
            <person name="Hauser H."/>
            <person name="Jagels K."/>
            <person name="Moule S."/>
            <person name="Mungall K."/>
            <person name="Norbertczak H."/>
            <person name="Rabbinowitsch E."/>
            <person name="Sanders M."/>
            <person name="Simmonds M."/>
            <person name="Whitehead S."/>
            <person name="Parkhill J."/>
        </authorList>
    </citation>
    <scope>NUCLEOTIDE SEQUENCE [LARGE SCALE GENOMIC DNA]</scope>
    <source>
        <strain>DSM 114642 / LMG 32736 / 3841</strain>
    </source>
</reference>
<accession>Q1MNC1</accession>
<evidence type="ECO:0000255" key="1">
    <source>
        <dbReference type="HAMAP-Rule" id="MF_01014"/>
    </source>
</evidence>
<keyword id="KW-0028">Amino-acid biosynthesis</keyword>
<keyword id="KW-0963">Cytoplasm</keyword>
<keyword id="KW-0368">Histidine biosynthesis</keyword>
<keyword id="KW-0413">Isomerase</keyword>
<protein>
    <recommendedName>
        <fullName evidence="1">1-(5-phosphoribosyl)-5-[(5-phosphoribosylamino)methylideneamino] imidazole-4-carboxamide isomerase</fullName>
        <ecNumber evidence="1">5.3.1.16</ecNumber>
    </recommendedName>
    <alternativeName>
        <fullName evidence="1">Phosphoribosylformimino-5-aminoimidazole carboxamide ribotide isomerase</fullName>
    </alternativeName>
</protein>
<comment type="catalytic activity">
    <reaction evidence="1">
        <text>1-(5-phospho-beta-D-ribosyl)-5-[(5-phospho-beta-D-ribosylamino)methylideneamino]imidazole-4-carboxamide = 5-[(5-phospho-1-deoxy-D-ribulos-1-ylimino)methylamino]-1-(5-phospho-beta-D-ribosyl)imidazole-4-carboxamide</text>
        <dbReference type="Rhea" id="RHEA:15469"/>
        <dbReference type="ChEBI" id="CHEBI:58435"/>
        <dbReference type="ChEBI" id="CHEBI:58525"/>
        <dbReference type="EC" id="5.3.1.16"/>
    </reaction>
</comment>
<comment type="pathway">
    <text evidence="1">Amino-acid biosynthesis; L-histidine biosynthesis; L-histidine from 5-phospho-alpha-D-ribose 1-diphosphate: step 4/9.</text>
</comment>
<comment type="subcellular location">
    <subcellularLocation>
        <location evidence="1">Cytoplasm</location>
    </subcellularLocation>
</comment>
<comment type="similarity">
    <text evidence="1">Belongs to the HisA/HisF family.</text>
</comment>
<organism>
    <name type="scientific">Rhizobium johnstonii (strain DSM 114642 / LMG 32736 / 3841)</name>
    <name type="common">Rhizobium leguminosarum bv. viciae</name>
    <dbReference type="NCBI Taxonomy" id="216596"/>
    <lineage>
        <taxon>Bacteria</taxon>
        <taxon>Pseudomonadati</taxon>
        <taxon>Pseudomonadota</taxon>
        <taxon>Alphaproteobacteria</taxon>
        <taxon>Hyphomicrobiales</taxon>
        <taxon>Rhizobiaceae</taxon>
        <taxon>Rhizobium/Agrobacterium group</taxon>
        <taxon>Rhizobium</taxon>
        <taxon>Rhizobium johnstonii</taxon>
    </lineage>
</organism>
<feature type="chain" id="PRO_0000290520" description="1-(5-phosphoribosyl)-5-[(5-phosphoribosylamino)methylideneamino] imidazole-4-carboxamide isomerase">
    <location>
        <begin position="1"/>
        <end position="248"/>
    </location>
</feature>
<feature type="active site" description="Proton acceptor" evidence="1">
    <location>
        <position position="8"/>
    </location>
</feature>
<feature type="active site" description="Proton donor" evidence="1">
    <location>
        <position position="129"/>
    </location>
</feature>
<proteinExistence type="inferred from homology"/>
<sequence>MILFPAIDLKGGQCVRLKLGDMQQATVYNTDPAAQARSFEDQGFEWLHVVDLDGAFAGHSANGDAVEAILKATDNPVQLGGGIRTLDHIEAWLSRGLRRVILGTVAVRNPDLVIEACRKFPDHVAVGIDAKGGKVAVEGWAEASELGIIELARKFEGAGVAAIIYTDIDRDGILAGINWSSTLELADAVSIPVIASGGLASLDDIRRMLEPDARKLEGAISGRALYDGRIDPKEALALIKAARAKETA</sequence>
<name>HIS4_RHIJ3</name>
<gene>
    <name evidence="1" type="primary">hisA</name>
    <name type="ordered locus">RL0043</name>
</gene>
<dbReference type="EC" id="5.3.1.16" evidence="1"/>
<dbReference type="EMBL" id="AM236080">
    <property type="protein sequence ID" value="CAK05531.1"/>
    <property type="molecule type" value="Genomic_DNA"/>
</dbReference>
<dbReference type="RefSeq" id="WP_011649868.1">
    <property type="nucleotide sequence ID" value="NC_008380.1"/>
</dbReference>
<dbReference type="SMR" id="Q1MNC1"/>
<dbReference type="EnsemblBacteria" id="CAK05531">
    <property type="protein sequence ID" value="CAK05531"/>
    <property type="gene ID" value="RL0043"/>
</dbReference>
<dbReference type="KEGG" id="rle:RL0043"/>
<dbReference type="eggNOG" id="COG0106">
    <property type="taxonomic scope" value="Bacteria"/>
</dbReference>
<dbReference type="HOGENOM" id="CLU_048577_1_1_5"/>
<dbReference type="UniPathway" id="UPA00031">
    <property type="reaction ID" value="UER00009"/>
</dbReference>
<dbReference type="Proteomes" id="UP000006575">
    <property type="component" value="Chromosome"/>
</dbReference>
<dbReference type="GO" id="GO:0005737">
    <property type="term" value="C:cytoplasm"/>
    <property type="evidence" value="ECO:0007669"/>
    <property type="project" value="UniProtKB-SubCell"/>
</dbReference>
<dbReference type="GO" id="GO:0003949">
    <property type="term" value="F:1-(5-phosphoribosyl)-5-[(5-phosphoribosylamino)methylideneamino]imidazole-4-carboxamide isomerase activity"/>
    <property type="evidence" value="ECO:0007669"/>
    <property type="project" value="UniProtKB-UniRule"/>
</dbReference>
<dbReference type="GO" id="GO:0000105">
    <property type="term" value="P:L-histidine biosynthetic process"/>
    <property type="evidence" value="ECO:0007669"/>
    <property type="project" value="UniProtKB-UniRule"/>
</dbReference>
<dbReference type="GO" id="GO:0000162">
    <property type="term" value="P:L-tryptophan biosynthetic process"/>
    <property type="evidence" value="ECO:0007669"/>
    <property type="project" value="TreeGrafter"/>
</dbReference>
<dbReference type="CDD" id="cd04732">
    <property type="entry name" value="HisA"/>
    <property type="match status" value="1"/>
</dbReference>
<dbReference type="FunFam" id="3.20.20.70:FF:000009">
    <property type="entry name" value="1-(5-phosphoribosyl)-5-[(5-phosphoribosylamino)methylideneamino] imidazole-4-carboxamide isomerase"/>
    <property type="match status" value="1"/>
</dbReference>
<dbReference type="Gene3D" id="3.20.20.70">
    <property type="entry name" value="Aldolase class I"/>
    <property type="match status" value="1"/>
</dbReference>
<dbReference type="HAMAP" id="MF_01014">
    <property type="entry name" value="HisA"/>
    <property type="match status" value="1"/>
</dbReference>
<dbReference type="InterPro" id="IPR013785">
    <property type="entry name" value="Aldolase_TIM"/>
</dbReference>
<dbReference type="InterPro" id="IPR006062">
    <property type="entry name" value="His_biosynth"/>
</dbReference>
<dbReference type="InterPro" id="IPR006063">
    <property type="entry name" value="HisA_bact_arch"/>
</dbReference>
<dbReference type="InterPro" id="IPR044524">
    <property type="entry name" value="Isoase_HisA-like"/>
</dbReference>
<dbReference type="InterPro" id="IPR023016">
    <property type="entry name" value="Isoase_HisA-like_bact"/>
</dbReference>
<dbReference type="InterPro" id="IPR001763">
    <property type="entry name" value="Rhodanese-like_dom"/>
</dbReference>
<dbReference type="InterPro" id="IPR011060">
    <property type="entry name" value="RibuloseP-bd_barrel"/>
</dbReference>
<dbReference type="NCBIfam" id="TIGR00007">
    <property type="entry name" value="1-(5-phosphoribosyl)-5-[(5-phosphoribosylamino)methylideneamino]imidazole-4-carboxamide isomerase"/>
    <property type="match status" value="1"/>
</dbReference>
<dbReference type="NCBIfam" id="NF010112">
    <property type="entry name" value="PRK13585.1"/>
    <property type="match status" value="1"/>
</dbReference>
<dbReference type="PANTHER" id="PTHR43090">
    <property type="entry name" value="1-(5-PHOSPHORIBOSYL)-5-[(5-PHOSPHORIBOSYLAMINO)METHYLIDENEAMINO] IMIDAZOLE-4-CARBOXAMIDE ISOMERASE"/>
    <property type="match status" value="1"/>
</dbReference>
<dbReference type="PANTHER" id="PTHR43090:SF2">
    <property type="entry name" value="1-(5-PHOSPHORIBOSYL)-5-[(5-PHOSPHORIBOSYLAMINO)METHYLIDENEAMINO] IMIDAZOLE-4-CARBOXAMIDE ISOMERASE"/>
    <property type="match status" value="1"/>
</dbReference>
<dbReference type="Pfam" id="PF00977">
    <property type="entry name" value="His_biosynth"/>
    <property type="match status" value="1"/>
</dbReference>
<dbReference type="SUPFAM" id="SSF51366">
    <property type="entry name" value="Ribulose-phoshate binding barrel"/>
    <property type="match status" value="1"/>
</dbReference>